<dbReference type="EC" id="5.6.1.7" evidence="1"/>
<dbReference type="EMBL" id="AL954747">
    <property type="protein sequence ID" value="CAD83939.1"/>
    <property type="molecule type" value="Genomic_DNA"/>
</dbReference>
<dbReference type="RefSeq" id="WP_011110680.1">
    <property type="nucleotide sequence ID" value="NC_004757.1"/>
</dbReference>
<dbReference type="SMR" id="Q82Y60"/>
<dbReference type="STRING" id="228410.NE0028"/>
<dbReference type="GeneID" id="87103235"/>
<dbReference type="KEGG" id="neu:NE0028"/>
<dbReference type="eggNOG" id="COG0459">
    <property type="taxonomic scope" value="Bacteria"/>
</dbReference>
<dbReference type="HOGENOM" id="CLU_016503_3_0_4"/>
<dbReference type="OrthoDB" id="9766614at2"/>
<dbReference type="PhylomeDB" id="Q82Y60"/>
<dbReference type="Proteomes" id="UP000001416">
    <property type="component" value="Chromosome"/>
</dbReference>
<dbReference type="GO" id="GO:0005737">
    <property type="term" value="C:cytoplasm"/>
    <property type="evidence" value="ECO:0007669"/>
    <property type="project" value="UniProtKB-SubCell"/>
</dbReference>
<dbReference type="GO" id="GO:0005524">
    <property type="term" value="F:ATP binding"/>
    <property type="evidence" value="ECO:0007669"/>
    <property type="project" value="UniProtKB-UniRule"/>
</dbReference>
<dbReference type="GO" id="GO:0140662">
    <property type="term" value="F:ATP-dependent protein folding chaperone"/>
    <property type="evidence" value="ECO:0007669"/>
    <property type="project" value="InterPro"/>
</dbReference>
<dbReference type="GO" id="GO:0016853">
    <property type="term" value="F:isomerase activity"/>
    <property type="evidence" value="ECO:0007669"/>
    <property type="project" value="UniProtKB-KW"/>
</dbReference>
<dbReference type="GO" id="GO:0051082">
    <property type="term" value="F:unfolded protein binding"/>
    <property type="evidence" value="ECO:0007669"/>
    <property type="project" value="UniProtKB-UniRule"/>
</dbReference>
<dbReference type="GO" id="GO:0042026">
    <property type="term" value="P:protein refolding"/>
    <property type="evidence" value="ECO:0007669"/>
    <property type="project" value="UniProtKB-UniRule"/>
</dbReference>
<dbReference type="CDD" id="cd03344">
    <property type="entry name" value="GroEL"/>
    <property type="match status" value="1"/>
</dbReference>
<dbReference type="FunFam" id="1.10.560.10:FF:000001">
    <property type="entry name" value="60 kDa chaperonin"/>
    <property type="match status" value="1"/>
</dbReference>
<dbReference type="FunFam" id="3.50.7.10:FF:000001">
    <property type="entry name" value="60 kDa chaperonin"/>
    <property type="match status" value="1"/>
</dbReference>
<dbReference type="Gene3D" id="3.50.7.10">
    <property type="entry name" value="GroEL"/>
    <property type="match status" value="1"/>
</dbReference>
<dbReference type="Gene3D" id="1.10.560.10">
    <property type="entry name" value="GroEL-like equatorial domain"/>
    <property type="match status" value="1"/>
</dbReference>
<dbReference type="Gene3D" id="3.30.260.10">
    <property type="entry name" value="TCP-1-like chaperonin intermediate domain"/>
    <property type="match status" value="1"/>
</dbReference>
<dbReference type="HAMAP" id="MF_00600">
    <property type="entry name" value="CH60"/>
    <property type="match status" value="1"/>
</dbReference>
<dbReference type="InterPro" id="IPR018370">
    <property type="entry name" value="Chaperonin_Cpn60_CS"/>
</dbReference>
<dbReference type="InterPro" id="IPR001844">
    <property type="entry name" value="Cpn60/GroEL"/>
</dbReference>
<dbReference type="InterPro" id="IPR002423">
    <property type="entry name" value="Cpn60/GroEL/TCP-1"/>
</dbReference>
<dbReference type="InterPro" id="IPR027409">
    <property type="entry name" value="GroEL-like_apical_dom_sf"/>
</dbReference>
<dbReference type="InterPro" id="IPR027413">
    <property type="entry name" value="GROEL-like_equatorial_sf"/>
</dbReference>
<dbReference type="InterPro" id="IPR027410">
    <property type="entry name" value="TCP-1-like_intermed_sf"/>
</dbReference>
<dbReference type="NCBIfam" id="TIGR02348">
    <property type="entry name" value="GroEL"/>
    <property type="match status" value="1"/>
</dbReference>
<dbReference type="NCBIfam" id="NF000592">
    <property type="entry name" value="PRK00013.1"/>
    <property type="match status" value="1"/>
</dbReference>
<dbReference type="NCBIfam" id="NF009487">
    <property type="entry name" value="PRK12849.1"/>
    <property type="match status" value="1"/>
</dbReference>
<dbReference type="NCBIfam" id="NF009488">
    <property type="entry name" value="PRK12850.1"/>
    <property type="match status" value="1"/>
</dbReference>
<dbReference type="NCBIfam" id="NF009489">
    <property type="entry name" value="PRK12851.1"/>
    <property type="match status" value="1"/>
</dbReference>
<dbReference type="PANTHER" id="PTHR45633">
    <property type="entry name" value="60 KDA HEAT SHOCK PROTEIN, MITOCHONDRIAL"/>
    <property type="match status" value="1"/>
</dbReference>
<dbReference type="Pfam" id="PF00118">
    <property type="entry name" value="Cpn60_TCP1"/>
    <property type="match status" value="1"/>
</dbReference>
<dbReference type="PRINTS" id="PR00298">
    <property type="entry name" value="CHAPERONIN60"/>
</dbReference>
<dbReference type="SUPFAM" id="SSF52029">
    <property type="entry name" value="GroEL apical domain-like"/>
    <property type="match status" value="1"/>
</dbReference>
<dbReference type="SUPFAM" id="SSF48592">
    <property type="entry name" value="GroEL equatorial domain-like"/>
    <property type="match status" value="1"/>
</dbReference>
<dbReference type="SUPFAM" id="SSF54849">
    <property type="entry name" value="GroEL-intermediate domain like"/>
    <property type="match status" value="1"/>
</dbReference>
<dbReference type="PROSITE" id="PS00296">
    <property type="entry name" value="CHAPERONINS_CPN60"/>
    <property type="match status" value="1"/>
</dbReference>
<organism>
    <name type="scientific">Nitrosomonas europaea (strain ATCC 19718 / CIP 103999 / KCTC 2705 / NBRC 14298)</name>
    <dbReference type="NCBI Taxonomy" id="228410"/>
    <lineage>
        <taxon>Bacteria</taxon>
        <taxon>Pseudomonadati</taxon>
        <taxon>Pseudomonadota</taxon>
        <taxon>Betaproteobacteria</taxon>
        <taxon>Nitrosomonadales</taxon>
        <taxon>Nitrosomonadaceae</taxon>
        <taxon>Nitrosomonas</taxon>
    </lineage>
</organism>
<proteinExistence type="inferred from homology"/>
<feature type="chain" id="PRO_0000063461" description="Chaperonin GroEL">
    <location>
        <begin position="1"/>
        <end position="547"/>
    </location>
</feature>
<feature type="region of interest" description="Disordered" evidence="2">
    <location>
        <begin position="525"/>
        <end position="547"/>
    </location>
</feature>
<feature type="compositionally biased region" description="Gly residues" evidence="2">
    <location>
        <begin position="532"/>
        <end position="547"/>
    </location>
</feature>
<feature type="binding site" evidence="1">
    <location>
        <begin position="30"/>
        <end position="33"/>
    </location>
    <ligand>
        <name>ATP</name>
        <dbReference type="ChEBI" id="CHEBI:30616"/>
    </ligand>
</feature>
<feature type="binding site" evidence="1">
    <location>
        <position position="51"/>
    </location>
    <ligand>
        <name>ATP</name>
        <dbReference type="ChEBI" id="CHEBI:30616"/>
    </ligand>
</feature>
<feature type="binding site" evidence="1">
    <location>
        <begin position="87"/>
        <end position="91"/>
    </location>
    <ligand>
        <name>ATP</name>
        <dbReference type="ChEBI" id="CHEBI:30616"/>
    </ligand>
</feature>
<feature type="binding site" evidence="1">
    <location>
        <position position="415"/>
    </location>
    <ligand>
        <name>ATP</name>
        <dbReference type="ChEBI" id="CHEBI:30616"/>
    </ligand>
</feature>
<feature type="binding site" evidence="1">
    <location>
        <begin position="479"/>
        <end position="481"/>
    </location>
    <ligand>
        <name>ATP</name>
        <dbReference type="ChEBI" id="CHEBI:30616"/>
    </ligand>
</feature>
<feature type="binding site" evidence="1">
    <location>
        <position position="495"/>
    </location>
    <ligand>
        <name>ATP</name>
        <dbReference type="ChEBI" id="CHEBI:30616"/>
    </ligand>
</feature>
<name>CH60_NITEU</name>
<gene>
    <name evidence="1" type="primary">groEL</name>
    <name evidence="1" type="synonym">groL</name>
    <name type="ordered locus">NE0028</name>
</gene>
<protein>
    <recommendedName>
        <fullName evidence="1">Chaperonin GroEL</fullName>
        <ecNumber evidence="1">5.6.1.7</ecNumber>
    </recommendedName>
    <alternativeName>
        <fullName evidence="1">60 kDa chaperonin</fullName>
    </alternativeName>
    <alternativeName>
        <fullName evidence="1">Chaperonin-60</fullName>
        <shortName evidence="1">Cpn60</shortName>
    </alternativeName>
</protein>
<keyword id="KW-0067">ATP-binding</keyword>
<keyword id="KW-0143">Chaperone</keyword>
<keyword id="KW-0963">Cytoplasm</keyword>
<keyword id="KW-0413">Isomerase</keyword>
<keyword id="KW-0547">Nucleotide-binding</keyword>
<keyword id="KW-1185">Reference proteome</keyword>
<sequence>MAAKEVRFGDSARQAVISGVNVLADAVKVTLGPKGRNVVLERSYGAPTITKDGVSVAKEIELKDKFENMGAQMVKEVASKTSDTAGDGTTTATVLAQSIVKEGMRYVAAGMNPMDLKRGIEKAVTGAVEELKKLSKPCSTSKEIAQVGSISANSDTEIGRIIAEAMDKVGKEGVITVEDGSGLENELDVVEGMQFDRGYLSPYFVSSADKQIAALESPFVLLHDKKISNIRDLLPVLEQVAKAGKPLLIIAEDVDGEALATLVVNNIRGILKTCAVKAPGFGDRRKAMLEDIAILTGGTVIAEEVGLSLEKTRLEDLGQAKRIEVGKENTTIIDGAGDVKTIEARVAQIRKQIEEASSDYDREKLQERVAKLAGGVALIKVGAATEVEMKEKKARVEDALHATRAAVEEGIVPGGGVALLRTINAVSKIKGDNHDQDSGIKIVLRAMEEPLRQIVTNCGDEASVVVNKVKEGQGTFGYNAATGEYGDLVAMGVLDPTKVTRSALQNAASVAGLILTTDAMVAELPKEDSPGAGAGMGGMGGMGGMDM</sequence>
<reference key="1">
    <citation type="journal article" date="2003" name="J. Bacteriol.">
        <title>Complete genome sequence of the ammonia-oxidizing bacterium and obligate chemolithoautotroph Nitrosomonas europaea.</title>
        <authorList>
            <person name="Chain P."/>
            <person name="Lamerdin J.E."/>
            <person name="Larimer F.W."/>
            <person name="Regala W."/>
            <person name="Lao V."/>
            <person name="Land M.L."/>
            <person name="Hauser L."/>
            <person name="Hooper A.B."/>
            <person name="Klotz M.G."/>
            <person name="Norton J."/>
            <person name="Sayavedra-Soto L.A."/>
            <person name="Arciero D.M."/>
            <person name="Hommes N.G."/>
            <person name="Whittaker M.M."/>
            <person name="Arp D.J."/>
        </authorList>
    </citation>
    <scope>NUCLEOTIDE SEQUENCE [LARGE SCALE GENOMIC DNA]</scope>
    <source>
        <strain>ATCC 19718 / CIP 103999 / KCTC 2705 / NBRC 14298</strain>
    </source>
</reference>
<accession>Q82Y60</accession>
<comment type="function">
    <text evidence="1">Together with its co-chaperonin GroES, plays an essential role in assisting protein folding. The GroEL-GroES system forms a nano-cage that allows encapsulation of the non-native substrate proteins and provides a physical environment optimized to promote and accelerate protein folding.</text>
</comment>
<comment type="catalytic activity">
    <reaction evidence="1">
        <text>ATP + H2O + a folded polypeptide = ADP + phosphate + an unfolded polypeptide.</text>
        <dbReference type="EC" id="5.6.1.7"/>
    </reaction>
</comment>
<comment type="subunit">
    <text evidence="1">Forms a cylinder of 14 subunits composed of two heptameric rings stacked back-to-back. Interacts with the co-chaperonin GroES.</text>
</comment>
<comment type="subcellular location">
    <subcellularLocation>
        <location evidence="1">Cytoplasm</location>
    </subcellularLocation>
</comment>
<comment type="similarity">
    <text evidence="1">Belongs to the chaperonin (HSP60) family.</text>
</comment>
<evidence type="ECO:0000255" key="1">
    <source>
        <dbReference type="HAMAP-Rule" id="MF_00600"/>
    </source>
</evidence>
<evidence type="ECO:0000256" key="2">
    <source>
        <dbReference type="SAM" id="MobiDB-lite"/>
    </source>
</evidence>